<dbReference type="EMBL" id="FM954972">
    <property type="protein sequence ID" value="CAV20415.1"/>
    <property type="molecule type" value="Genomic_DNA"/>
</dbReference>
<dbReference type="SMR" id="B7VN07"/>
<dbReference type="STRING" id="575788.VS_3163"/>
<dbReference type="KEGG" id="vsp:VS_3163"/>
<dbReference type="eggNOG" id="COG0445">
    <property type="taxonomic scope" value="Bacteria"/>
</dbReference>
<dbReference type="HOGENOM" id="CLU_007831_2_2_6"/>
<dbReference type="Proteomes" id="UP000009100">
    <property type="component" value="Chromosome 1"/>
</dbReference>
<dbReference type="GO" id="GO:0005829">
    <property type="term" value="C:cytosol"/>
    <property type="evidence" value="ECO:0007669"/>
    <property type="project" value="TreeGrafter"/>
</dbReference>
<dbReference type="GO" id="GO:0050660">
    <property type="term" value="F:flavin adenine dinucleotide binding"/>
    <property type="evidence" value="ECO:0007669"/>
    <property type="project" value="UniProtKB-UniRule"/>
</dbReference>
<dbReference type="GO" id="GO:0030488">
    <property type="term" value="P:tRNA methylation"/>
    <property type="evidence" value="ECO:0007669"/>
    <property type="project" value="TreeGrafter"/>
</dbReference>
<dbReference type="GO" id="GO:0002098">
    <property type="term" value="P:tRNA wobble uridine modification"/>
    <property type="evidence" value="ECO:0007669"/>
    <property type="project" value="InterPro"/>
</dbReference>
<dbReference type="FunFam" id="1.10.10.1800:FF:000001">
    <property type="entry name" value="tRNA uridine 5-carboxymethylaminomethyl modification enzyme MnmG"/>
    <property type="match status" value="1"/>
</dbReference>
<dbReference type="FunFam" id="1.10.150.570:FF:000001">
    <property type="entry name" value="tRNA uridine 5-carboxymethylaminomethyl modification enzyme MnmG"/>
    <property type="match status" value="1"/>
</dbReference>
<dbReference type="FunFam" id="3.50.50.60:FF:000002">
    <property type="entry name" value="tRNA uridine 5-carboxymethylaminomethyl modification enzyme MnmG"/>
    <property type="match status" value="1"/>
</dbReference>
<dbReference type="FunFam" id="3.50.50.60:FF:000010">
    <property type="entry name" value="tRNA uridine 5-carboxymethylaminomethyl modification enzyme MnmG"/>
    <property type="match status" value="1"/>
</dbReference>
<dbReference type="Gene3D" id="3.50.50.60">
    <property type="entry name" value="FAD/NAD(P)-binding domain"/>
    <property type="match status" value="2"/>
</dbReference>
<dbReference type="Gene3D" id="1.10.150.570">
    <property type="entry name" value="GidA associated domain, C-terminal subdomain"/>
    <property type="match status" value="1"/>
</dbReference>
<dbReference type="Gene3D" id="1.10.10.1800">
    <property type="entry name" value="tRNA uridine 5-carboxymethylaminomethyl modification enzyme MnmG/GidA"/>
    <property type="match status" value="1"/>
</dbReference>
<dbReference type="HAMAP" id="MF_00129">
    <property type="entry name" value="MnmG_GidA"/>
    <property type="match status" value="1"/>
</dbReference>
<dbReference type="InterPro" id="IPR036188">
    <property type="entry name" value="FAD/NAD-bd_sf"/>
</dbReference>
<dbReference type="InterPro" id="IPR049312">
    <property type="entry name" value="GIDA_C_N"/>
</dbReference>
<dbReference type="InterPro" id="IPR004416">
    <property type="entry name" value="MnmG"/>
</dbReference>
<dbReference type="InterPro" id="IPR002218">
    <property type="entry name" value="MnmG-rel"/>
</dbReference>
<dbReference type="InterPro" id="IPR020595">
    <property type="entry name" value="MnmG-rel_CS"/>
</dbReference>
<dbReference type="InterPro" id="IPR026904">
    <property type="entry name" value="MnmG_C"/>
</dbReference>
<dbReference type="InterPro" id="IPR047001">
    <property type="entry name" value="MnmG_C_subdom"/>
</dbReference>
<dbReference type="InterPro" id="IPR044920">
    <property type="entry name" value="MnmG_C_subdom_sf"/>
</dbReference>
<dbReference type="InterPro" id="IPR040131">
    <property type="entry name" value="MnmG_N"/>
</dbReference>
<dbReference type="NCBIfam" id="TIGR00136">
    <property type="entry name" value="mnmG_gidA"/>
    <property type="match status" value="1"/>
</dbReference>
<dbReference type="PANTHER" id="PTHR11806">
    <property type="entry name" value="GLUCOSE INHIBITED DIVISION PROTEIN A"/>
    <property type="match status" value="1"/>
</dbReference>
<dbReference type="PANTHER" id="PTHR11806:SF0">
    <property type="entry name" value="PROTEIN MTO1 HOMOLOG, MITOCHONDRIAL"/>
    <property type="match status" value="1"/>
</dbReference>
<dbReference type="Pfam" id="PF01134">
    <property type="entry name" value="GIDA"/>
    <property type="match status" value="1"/>
</dbReference>
<dbReference type="Pfam" id="PF21680">
    <property type="entry name" value="GIDA_C_1st"/>
    <property type="match status" value="1"/>
</dbReference>
<dbReference type="Pfam" id="PF13932">
    <property type="entry name" value="SAM_GIDA_C"/>
    <property type="match status" value="1"/>
</dbReference>
<dbReference type="SMART" id="SM01228">
    <property type="entry name" value="GIDA_assoc_3"/>
    <property type="match status" value="1"/>
</dbReference>
<dbReference type="SUPFAM" id="SSF51905">
    <property type="entry name" value="FAD/NAD(P)-binding domain"/>
    <property type="match status" value="1"/>
</dbReference>
<dbReference type="PROSITE" id="PS01280">
    <property type="entry name" value="GIDA_1"/>
    <property type="match status" value="1"/>
</dbReference>
<dbReference type="PROSITE" id="PS01281">
    <property type="entry name" value="GIDA_2"/>
    <property type="match status" value="1"/>
</dbReference>
<proteinExistence type="inferred from homology"/>
<sequence length="631" mass="70186">MLYHEKFDVIVVGGGHAGTEAALASARTGQSTLLLTHNIDTLGQMSCNPAIGGIGKGHLVKEVDAMGGLMAQAIDHAGIQFRTLNASKGPAVRATRAQADRALYKAFVRNVLENTPNLTLFQQSVDDLIVEQDQVVGVVTQMGLKFRANAVVLTVGTFLGGKIHIGMESSSGGRAGDPPSIALADRLRDLPFRVDRLKTGTPPRIDARSVDFSELEVQHGDNPTPVFSFMGNRAQQPRQIPCYITHTNENTHDVIRANLDRSPMYAGVIEGIGPRYCPSIEDKVMRFADKNSHQIFIEPEGLTTHELYPNGISTSLPFDVQVKIVHSMKGFENAHIVRPGYAIEYDFFDPRDLKLTYETKFIKGLFFAGQINGTTGYEEAAAQGLMAGLNASLFTQGKEGWSPRRDQAYMGVLIDDLSTMGTKEPYRMFTSRAEYRLLLREDNADIRLTEKSRELGLVDDARWTRFNEKMENMEKERQRLKETWINPKSEDIDQLNQILKTPMSREASGEDLLRRPEMTYSQLTSLDRFGPALEDQQASEQVEIQVKYDGYIQRQQDEIEKSLRHENTKLPADIDYSKVKGLSNEVVLKLTTAKPDSIGIASRISGITPAAISILLVYLKKHGLLKKGEEA</sequence>
<comment type="function">
    <text evidence="1">NAD-binding protein involved in the addition of a carboxymethylaminomethyl (cmnm) group at the wobble position (U34) of certain tRNAs, forming tRNA-cmnm(5)s(2)U34.</text>
</comment>
<comment type="cofactor">
    <cofactor evidence="1">
        <name>FAD</name>
        <dbReference type="ChEBI" id="CHEBI:57692"/>
    </cofactor>
</comment>
<comment type="subunit">
    <text evidence="1">Homodimer. Heterotetramer of two MnmE and two MnmG subunits.</text>
</comment>
<comment type="subcellular location">
    <subcellularLocation>
        <location evidence="1">Cytoplasm</location>
    </subcellularLocation>
</comment>
<comment type="similarity">
    <text evidence="1">Belongs to the MnmG family.</text>
</comment>
<evidence type="ECO:0000255" key="1">
    <source>
        <dbReference type="HAMAP-Rule" id="MF_00129"/>
    </source>
</evidence>
<feature type="chain" id="PRO_1000122759" description="tRNA uridine 5-carboxymethylaminomethyl modification enzyme MnmG">
    <location>
        <begin position="1"/>
        <end position="631"/>
    </location>
</feature>
<feature type="binding site" evidence="1">
    <location>
        <begin position="13"/>
        <end position="18"/>
    </location>
    <ligand>
        <name>FAD</name>
        <dbReference type="ChEBI" id="CHEBI:57692"/>
    </ligand>
</feature>
<feature type="binding site" evidence="1">
    <location>
        <position position="125"/>
    </location>
    <ligand>
        <name>FAD</name>
        <dbReference type="ChEBI" id="CHEBI:57692"/>
    </ligand>
</feature>
<feature type="binding site" evidence="1">
    <location>
        <position position="180"/>
    </location>
    <ligand>
        <name>FAD</name>
        <dbReference type="ChEBI" id="CHEBI:57692"/>
    </ligand>
</feature>
<feature type="binding site" evidence="1">
    <location>
        <begin position="273"/>
        <end position="287"/>
    </location>
    <ligand>
        <name>NAD(+)</name>
        <dbReference type="ChEBI" id="CHEBI:57540"/>
    </ligand>
</feature>
<feature type="binding site" evidence="1">
    <location>
        <position position="370"/>
    </location>
    <ligand>
        <name>FAD</name>
        <dbReference type="ChEBI" id="CHEBI:57692"/>
    </ligand>
</feature>
<reference key="1">
    <citation type="submission" date="2009-02" db="EMBL/GenBank/DDBJ databases">
        <title>Vibrio splendidus str. LGP32 complete genome.</title>
        <authorList>
            <person name="Mazel D."/>
            <person name="Le Roux F."/>
        </authorList>
    </citation>
    <scope>NUCLEOTIDE SEQUENCE [LARGE SCALE GENOMIC DNA]</scope>
    <source>
        <strain>LGP32</strain>
    </source>
</reference>
<gene>
    <name evidence="1" type="primary">mnmG</name>
    <name evidence="1" type="synonym">gidA</name>
    <name type="ordered locus">VS_3163</name>
</gene>
<name>MNMG_VIBA3</name>
<accession>B7VN07</accession>
<protein>
    <recommendedName>
        <fullName evidence="1">tRNA uridine 5-carboxymethylaminomethyl modification enzyme MnmG</fullName>
    </recommendedName>
    <alternativeName>
        <fullName evidence="1">Glucose-inhibited division protein A</fullName>
    </alternativeName>
</protein>
<keyword id="KW-0963">Cytoplasm</keyword>
<keyword id="KW-0274">FAD</keyword>
<keyword id="KW-0285">Flavoprotein</keyword>
<keyword id="KW-0520">NAD</keyword>
<keyword id="KW-0819">tRNA processing</keyword>
<organism>
    <name type="scientific">Vibrio atlanticus (strain LGP32)</name>
    <name type="common">Vibrio splendidus (strain Mel32)</name>
    <dbReference type="NCBI Taxonomy" id="575788"/>
    <lineage>
        <taxon>Bacteria</taxon>
        <taxon>Pseudomonadati</taxon>
        <taxon>Pseudomonadota</taxon>
        <taxon>Gammaproteobacteria</taxon>
        <taxon>Vibrionales</taxon>
        <taxon>Vibrionaceae</taxon>
        <taxon>Vibrio</taxon>
    </lineage>
</organism>